<organism>
    <name type="scientific">Escherichia coli (strain 55989 / EAEC)</name>
    <dbReference type="NCBI Taxonomy" id="585055"/>
    <lineage>
        <taxon>Bacteria</taxon>
        <taxon>Pseudomonadati</taxon>
        <taxon>Pseudomonadota</taxon>
        <taxon>Gammaproteobacteria</taxon>
        <taxon>Enterobacterales</taxon>
        <taxon>Enterobacteriaceae</taxon>
        <taxon>Escherichia</taxon>
    </lineage>
</organism>
<accession>B7L548</accession>
<comment type="function">
    <text evidence="1">May be involved in recombination.</text>
</comment>
<comment type="subcellular location">
    <subcellularLocation>
        <location evidence="1">Cytoplasm</location>
        <location evidence="1">Nucleoid</location>
    </subcellularLocation>
</comment>
<comment type="similarity">
    <text evidence="1">Belongs to the RdgC family.</text>
</comment>
<sequence>MLWFKNLMVYRLSREISLRAEEMEKQLASMAFTPCGSQDMAKMGWVPPMGSHSDALTHVANGQIVICARKEEKILPSPVIKQALEAKIAKLEAEQARKLKKTEKDSLKDEVLHSLLPRAFSRFSQTMMWIDTVNGLIMVDCASAKKAEDTLALLRKSLGSLPVVPLSMENPIELTLTEWVRSGSAAQGFQLLDEAELKSLLEDGGVIRAKKQDLTSEEITNHIEAGKVVTKLALDWQQRIQFVMCDDGSLKRLKFCDELRDQNEDIDREDFAQRFDADFILMTGELAALIQNLIEGLGGEAQR</sequence>
<reference key="1">
    <citation type="journal article" date="2009" name="PLoS Genet.">
        <title>Organised genome dynamics in the Escherichia coli species results in highly diverse adaptive paths.</title>
        <authorList>
            <person name="Touchon M."/>
            <person name="Hoede C."/>
            <person name="Tenaillon O."/>
            <person name="Barbe V."/>
            <person name="Baeriswyl S."/>
            <person name="Bidet P."/>
            <person name="Bingen E."/>
            <person name="Bonacorsi S."/>
            <person name="Bouchier C."/>
            <person name="Bouvet O."/>
            <person name="Calteau A."/>
            <person name="Chiapello H."/>
            <person name="Clermont O."/>
            <person name="Cruveiller S."/>
            <person name="Danchin A."/>
            <person name="Diard M."/>
            <person name="Dossat C."/>
            <person name="Karoui M.E."/>
            <person name="Frapy E."/>
            <person name="Garry L."/>
            <person name="Ghigo J.M."/>
            <person name="Gilles A.M."/>
            <person name="Johnson J."/>
            <person name="Le Bouguenec C."/>
            <person name="Lescat M."/>
            <person name="Mangenot S."/>
            <person name="Martinez-Jehanne V."/>
            <person name="Matic I."/>
            <person name="Nassif X."/>
            <person name="Oztas S."/>
            <person name="Petit M.A."/>
            <person name="Pichon C."/>
            <person name="Rouy Z."/>
            <person name="Ruf C.S."/>
            <person name="Schneider D."/>
            <person name="Tourret J."/>
            <person name="Vacherie B."/>
            <person name="Vallenet D."/>
            <person name="Medigue C."/>
            <person name="Rocha E.P.C."/>
            <person name="Denamur E."/>
        </authorList>
    </citation>
    <scope>NUCLEOTIDE SEQUENCE [LARGE SCALE GENOMIC DNA]</scope>
    <source>
        <strain>55989 / EAEC</strain>
    </source>
</reference>
<gene>
    <name evidence="1" type="primary">rdgC</name>
    <name type="ordered locus">EC55989_0402</name>
</gene>
<dbReference type="EMBL" id="CU928145">
    <property type="protein sequence ID" value="CAU96276.1"/>
    <property type="molecule type" value="Genomic_DNA"/>
</dbReference>
<dbReference type="RefSeq" id="WP_001298537.1">
    <property type="nucleotide sequence ID" value="NC_011748.1"/>
</dbReference>
<dbReference type="SMR" id="B7L548"/>
<dbReference type="GeneID" id="75202816"/>
<dbReference type="KEGG" id="eck:EC55989_0402"/>
<dbReference type="HOGENOM" id="CLU_052038_1_1_6"/>
<dbReference type="Proteomes" id="UP000000746">
    <property type="component" value="Chromosome"/>
</dbReference>
<dbReference type="GO" id="GO:0043590">
    <property type="term" value="C:bacterial nucleoid"/>
    <property type="evidence" value="ECO:0007669"/>
    <property type="project" value="TreeGrafter"/>
</dbReference>
<dbReference type="GO" id="GO:0005737">
    <property type="term" value="C:cytoplasm"/>
    <property type="evidence" value="ECO:0007669"/>
    <property type="project" value="UniProtKB-UniRule"/>
</dbReference>
<dbReference type="GO" id="GO:0003690">
    <property type="term" value="F:double-stranded DNA binding"/>
    <property type="evidence" value="ECO:0007669"/>
    <property type="project" value="TreeGrafter"/>
</dbReference>
<dbReference type="GO" id="GO:0006310">
    <property type="term" value="P:DNA recombination"/>
    <property type="evidence" value="ECO:0007669"/>
    <property type="project" value="UniProtKB-UniRule"/>
</dbReference>
<dbReference type="GO" id="GO:0000018">
    <property type="term" value="P:regulation of DNA recombination"/>
    <property type="evidence" value="ECO:0007669"/>
    <property type="project" value="TreeGrafter"/>
</dbReference>
<dbReference type="HAMAP" id="MF_00194">
    <property type="entry name" value="RdgC"/>
    <property type="match status" value="1"/>
</dbReference>
<dbReference type="InterPro" id="IPR007476">
    <property type="entry name" value="RdgC"/>
</dbReference>
<dbReference type="NCBIfam" id="NF001460">
    <property type="entry name" value="PRK00321.1-1"/>
    <property type="match status" value="1"/>
</dbReference>
<dbReference type="NCBIfam" id="NF001462">
    <property type="entry name" value="PRK00321.1-3"/>
    <property type="match status" value="1"/>
</dbReference>
<dbReference type="NCBIfam" id="NF001464">
    <property type="entry name" value="PRK00321.1-5"/>
    <property type="match status" value="1"/>
</dbReference>
<dbReference type="PANTHER" id="PTHR38103">
    <property type="entry name" value="RECOMBINATION-ASSOCIATED PROTEIN RDGC"/>
    <property type="match status" value="1"/>
</dbReference>
<dbReference type="PANTHER" id="PTHR38103:SF1">
    <property type="entry name" value="RECOMBINATION-ASSOCIATED PROTEIN RDGC"/>
    <property type="match status" value="1"/>
</dbReference>
<dbReference type="Pfam" id="PF04381">
    <property type="entry name" value="RdgC"/>
    <property type="match status" value="1"/>
</dbReference>
<proteinExistence type="inferred from homology"/>
<keyword id="KW-0963">Cytoplasm</keyword>
<keyword id="KW-0233">DNA recombination</keyword>
<keyword id="KW-1185">Reference proteome</keyword>
<feature type="chain" id="PRO_1000193274" description="Recombination-associated protein RdgC">
    <location>
        <begin position="1"/>
        <end position="303"/>
    </location>
</feature>
<protein>
    <recommendedName>
        <fullName evidence="1">Recombination-associated protein RdgC</fullName>
    </recommendedName>
</protein>
<name>RDGC_ECO55</name>
<evidence type="ECO:0000255" key="1">
    <source>
        <dbReference type="HAMAP-Rule" id="MF_00194"/>
    </source>
</evidence>